<accession>Q8NEN0</accession>
<accession>A8K8Y4</accession>
<accession>B4DGF5</accession>
<accession>G5E993</accession>
<accession>Q5VVY8</accession>
<accession>Q9H0K9</accession>
<comment type="function">
    <text evidence="1">Required for sperm flagellum axoneme organization and function (By similarity). Involved in axonemal central pair complex assembly and/or stability (By similarity).</text>
</comment>
<comment type="alternative products">
    <event type="alternative splicing"/>
    <isoform>
        <id>Q8NEN0-1</id>
        <name>1</name>
        <sequence type="displayed"/>
    </isoform>
    <isoform>
        <id>Q8NEN0-2</id>
        <name>2</name>
        <sequence type="described" ref="VSP_055622"/>
    </isoform>
</comment>
<comment type="tissue specificity">
    <text evidence="4">Expressed at higher level in testis.</text>
</comment>
<comment type="disease" evidence="4">
    <disease id="DI-05557">
        <name>Spermatogenic failure 38</name>
        <acronym>SPGF38</acronym>
        <description>An autosomal recessive infertility disorder characterized by asthenoteratozoospermia. Spermatozoa exhibit multiple morphologic abnormalities including short, absent, coiled, bent, or irregular-caliber flagella.</description>
        <dbReference type="MIM" id="618433"/>
    </disease>
    <text>The disease is caused by variants affecting the gene represented in this entry.</text>
</comment>
<comment type="sequence caution" evidence="7">
    <conflict type="erroneous initiation">
        <sequence resource="EMBL-CDS" id="AAH30603"/>
    </conflict>
</comment>
<comment type="sequence caution" evidence="7">
    <conflict type="erroneous initiation">
        <sequence resource="EMBL-CDS" id="BAF85188"/>
    </conflict>
</comment>
<gene>
    <name evidence="6 8" type="primary">ARMC2</name>
</gene>
<name>ARMC2_HUMAN</name>
<protein>
    <recommendedName>
        <fullName evidence="7">Armadillo repeat-containing protein 2</fullName>
    </recommendedName>
</protein>
<reference key="1">
    <citation type="journal article" date="2004" name="Nat. Genet.">
        <title>Complete sequencing and characterization of 21,243 full-length human cDNAs.</title>
        <authorList>
            <person name="Ota T."/>
            <person name="Suzuki Y."/>
            <person name="Nishikawa T."/>
            <person name="Otsuki T."/>
            <person name="Sugiyama T."/>
            <person name="Irie R."/>
            <person name="Wakamatsu A."/>
            <person name="Hayashi K."/>
            <person name="Sato H."/>
            <person name="Nagai K."/>
            <person name="Kimura K."/>
            <person name="Makita H."/>
            <person name="Sekine M."/>
            <person name="Obayashi M."/>
            <person name="Nishi T."/>
            <person name="Shibahara T."/>
            <person name="Tanaka T."/>
            <person name="Ishii S."/>
            <person name="Yamamoto J."/>
            <person name="Saito K."/>
            <person name="Kawai Y."/>
            <person name="Isono Y."/>
            <person name="Nakamura Y."/>
            <person name="Nagahari K."/>
            <person name="Murakami K."/>
            <person name="Yasuda T."/>
            <person name="Iwayanagi T."/>
            <person name="Wagatsuma M."/>
            <person name="Shiratori A."/>
            <person name="Sudo H."/>
            <person name="Hosoiri T."/>
            <person name="Kaku Y."/>
            <person name="Kodaira H."/>
            <person name="Kondo H."/>
            <person name="Sugawara M."/>
            <person name="Takahashi M."/>
            <person name="Kanda K."/>
            <person name="Yokoi T."/>
            <person name="Furuya T."/>
            <person name="Kikkawa E."/>
            <person name="Omura Y."/>
            <person name="Abe K."/>
            <person name="Kamihara K."/>
            <person name="Katsuta N."/>
            <person name="Sato K."/>
            <person name="Tanikawa M."/>
            <person name="Yamazaki M."/>
            <person name="Ninomiya K."/>
            <person name="Ishibashi T."/>
            <person name="Yamashita H."/>
            <person name="Murakawa K."/>
            <person name="Fujimori K."/>
            <person name="Tanai H."/>
            <person name="Kimata M."/>
            <person name="Watanabe M."/>
            <person name="Hiraoka S."/>
            <person name="Chiba Y."/>
            <person name="Ishida S."/>
            <person name="Ono Y."/>
            <person name="Takiguchi S."/>
            <person name="Watanabe S."/>
            <person name="Yosida M."/>
            <person name="Hotuta T."/>
            <person name="Kusano J."/>
            <person name="Kanehori K."/>
            <person name="Takahashi-Fujii A."/>
            <person name="Hara H."/>
            <person name="Tanase T.-O."/>
            <person name="Nomura Y."/>
            <person name="Togiya S."/>
            <person name="Komai F."/>
            <person name="Hara R."/>
            <person name="Takeuchi K."/>
            <person name="Arita M."/>
            <person name="Imose N."/>
            <person name="Musashino K."/>
            <person name="Yuuki H."/>
            <person name="Oshima A."/>
            <person name="Sasaki N."/>
            <person name="Aotsuka S."/>
            <person name="Yoshikawa Y."/>
            <person name="Matsunawa H."/>
            <person name="Ichihara T."/>
            <person name="Shiohata N."/>
            <person name="Sano S."/>
            <person name="Moriya S."/>
            <person name="Momiyama H."/>
            <person name="Satoh N."/>
            <person name="Takami S."/>
            <person name="Terashima Y."/>
            <person name="Suzuki O."/>
            <person name="Nakagawa S."/>
            <person name="Senoh A."/>
            <person name="Mizoguchi H."/>
            <person name="Goto Y."/>
            <person name="Shimizu F."/>
            <person name="Wakebe H."/>
            <person name="Hishigaki H."/>
            <person name="Watanabe T."/>
            <person name="Sugiyama A."/>
            <person name="Takemoto M."/>
            <person name="Kawakami B."/>
            <person name="Yamazaki M."/>
            <person name="Watanabe K."/>
            <person name="Kumagai A."/>
            <person name="Itakura S."/>
            <person name="Fukuzumi Y."/>
            <person name="Fujimori Y."/>
            <person name="Komiyama M."/>
            <person name="Tashiro H."/>
            <person name="Tanigami A."/>
            <person name="Fujiwara T."/>
            <person name="Ono T."/>
            <person name="Yamada K."/>
            <person name="Fujii Y."/>
            <person name="Ozaki K."/>
            <person name="Hirao M."/>
            <person name="Ohmori Y."/>
            <person name="Kawabata A."/>
            <person name="Hikiji T."/>
            <person name="Kobatake N."/>
            <person name="Inagaki H."/>
            <person name="Ikema Y."/>
            <person name="Okamoto S."/>
            <person name="Okitani R."/>
            <person name="Kawakami T."/>
            <person name="Noguchi S."/>
            <person name="Itoh T."/>
            <person name="Shigeta K."/>
            <person name="Senba T."/>
            <person name="Matsumura K."/>
            <person name="Nakajima Y."/>
            <person name="Mizuno T."/>
            <person name="Morinaga M."/>
            <person name="Sasaki M."/>
            <person name="Togashi T."/>
            <person name="Oyama M."/>
            <person name="Hata H."/>
            <person name="Watanabe M."/>
            <person name="Komatsu T."/>
            <person name="Mizushima-Sugano J."/>
            <person name="Satoh T."/>
            <person name="Shirai Y."/>
            <person name="Takahashi Y."/>
            <person name="Nakagawa K."/>
            <person name="Okumura K."/>
            <person name="Nagase T."/>
            <person name="Nomura N."/>
            <person name="Kikuchi H."/>
            <person name="Masuho Y."/>
            <person name="Yamashita R."/>
            <person name="Nakai K."/>
            <person name="Yada T."/>
            <person name="Nakamura Y."/>
            <person name="Ohara O."/>
            <person name="Isogai T."/>
            <person name="Sugano S."/>
        </authorList>
    </citation>
    <scope>NUCLEOTIDE SEQUENCE [LARGE SCALE MRNA] (ISOFORMS 1 AND 2)</scope>
    <source>
        <tissue>Amygdala</tissue>
        <tissue>Testis</tissue>
    </source>
</reference>
<reference key="2">
    <citation type="journal article" date="2003" name="Nature">
        <title>The DNA sequence and analysis of human chromosome 6.</title>
        <authorList>
            <person name="Mungall A.J."/>
            <person name="Palmer S.A."/>
            <person name="Sims S.K."/>
            <person name="Edwards C.A."/>
            <person name="Ashurst J.L."/>
            <person name="Wilming L."/>
            <person name="Jones M.C."/>
            <person name="Horton R."/>
            <person name="Hunt S.E."/>
            <person name="Scott C.E."/>
            <person name="Gilbert J.G.R."/>
            <person name="Clamp M.E."/>
            <person name="Bethel G."/>
            <person name="Milne S."/>
            <person name="Ainscough R."/>
            <person name="Almeida J.P."/>
            <person name="Ambrose K.D."/>
            <person name="Andrews T.D."/>
            <person name="Ashwell R.I.S."/>
            <person name="Babbage A.K."/>
            <person name="Bagguley C.L."/>
            <person name="Bailey J."/>
            <person name="Banerjee R."/>
            <person name="Barker D.J."/>
            <person name="Barlow K.F."/>
            <person name="Bates K."/>
            <person name="Beare D.M."/>
            <person name="Beasley H."/>
            <person name="Beasley O."/>
            <person name="Bird C.P."/>
            <person name="Blakey S.E."/>
            <person name="Bray-Allen S."/>
            <person name="Brook J."/>
            <person name="Brown A.J."/>
            <person name="Brown J.Y."/>
            <person name="Burford D.C."/>
            <person name="Burrill W."/>
            <person name="Burton J."/>
            <person name="Carder C."/>
            <person name="Carter N.P."/>
            <person name="Chapman J.C."/>
            <person name="Clark S.Y."/>
            <person name="Clark G."/>
            <person name="Clee C.M."/>
            <person name="Clegg S."/>
            <person name="Cobley V."/>
            <person name="Collier R.E."/>
            <person name="Collins J.E."/>
            <person name="Colman L.K."/>
            <person name="Corby N.R."/>
            <person name="Coville G.J."/>
            <person name="Culley K.M."/>
            <person name="Dhami P."/>
            <person name="Davies J."/>
            <person name="Dunn M."/>
            <person name="Earthrowl M.E."/>
            <person name="Ellington A.E."/>
            <person name="Evans K.A."/>
            <person name="Faulkner L."/>
            <person name="Francis M.D."/>
            <person name="Frankish A."/>
            <person name="Frankland J."/>
            <person name="French L."/>
            <person name="Garner P."/>
            <person name="Garnett J."/>
            <person name="Ghori M.J."/>
            <person name="Gilby L.M."/>
            <person name="Gillson C.J."/>
            <person name="Glithero R.J."/>
            <person name="Grafham D.V."/>
            <person name="Grant M."/>
            <person name="Gribble S."/>
            <person name="Griffiths C."/>
            <person name="Griffiths M.N.D."/>
            <person name="Hall R."/>
            <person name="Halls K.S."/>
            <person name="Hammond S."/>
            <person name="Harley J.L."/>
            <person name="Hart E.A."/>
            <person name="Heath P.D."/>
            <person name="Heathcott R."/>
            <person name="Holmes S.J."/>
            <person name="Howden P.J."/>
            <person name="Howe K.L."/>
            <person name="Howell G.R."/>
            <person name="Huckle E."/>
            <person name="Humphray S.J."/>
            <person name="Humphries M.D."/>
            <person name="Hunt A.R."/>
            <person name="Johnson C.M."/>
            <person name="Joy A.A."/>
            <person name="Kay M."/>
            <person name="Keenan S.J."/>
            <person name="Kimberley A.M."/>
            <person name="King A."/>
            <person name="Laird G.K."/>
            <person name="Langford C."/>
            <person name="Lawlor S."/>
            <person name="Leongamornlert D.A."/>
            <person name="Leversha M."/>
            <person name="Lloyd C.R."/>
            <person name="Lloyd D.M."/>
            <person name="Loveland J.E."/>
            <person name="Lovell J."/>
            <person name="Martin S."/>
            <person name="Mashreghi-Mohammadi M."/>
            <person name="Maslen G.L."/>
            <person name="Matthews L."/>
            <person name="McCann O.T."/>
            <person name="McLaren S.J."/>
            <person name="McLay K."/>
            <person name="McMurray A."/>
            <person name="Moore M.J.F."/>
            <person name="Mullikin J.C."/>
            <person name="Niblett D."/>
            <person name="Nickerson T."/>
            <person name="Novik K.L."/>
            <person name="Oliver K."/>
            <person name="Overton-Larty E.K."/>
            <person name="Parker A."/>
            <person name="Patel R."/>
            <person name="Pearce A.V."/>
            <person name="Peck A.I."/>
            <person name="Phillimore B.J.C.T."/>
            <person name="Phillips S."/>
            <person name="Plumb R.W."/>
            <person name="Porter K.M."/>
            <person name="Ramsey Y."/>
            <person name="Ranby S.A."/>
            <person name="Rice C.M."/>
            <person name="Ross M.T."/>
            <person name="Searle S.M."/>
            <person name="Sehra H.K."/>
            <person name="Sheridan E."/>
            <person name="Skuce C.D."/>
            <person name="Smith S."/>
            <person name="Smith M."/>
            <person name="Spraggon L."/>
            <person name="Squares S.L."/>
            <person name="Steward C.A."/>
            <person name="Sycamore N."/>
            <person name="Tamlyn-Hall G."/>
            <person name="Tester J."/>
            <person name="Theaker A.J."/>
            <person name="Thomas D.W."/>
            <person name="Thorpe A."/>
            <person name="Tracey A."/>
            <person name="Tromans A."/>
            <person name="Tubby B."/>
            <person name="Wall M."/>
            <person name="Wallis J.M."/>
            <person name="West A.P."/>
            <person name="White S.S."/>
            <person name="Whitehead S.L."/>
            <person name="Whittaker H."/>
            <person name="Wild A."/>
            <person name="Willey D.J."/>
            <person name="Wilmer T.E."/>
            <person name="Wood J.M."/>
            <person name="Wray P.W."/>
            <person name="Wyatt J.C."/>
            <person name="Young L."/>
            <person name="Younger R.M."/>
            <person name="Bentley D.R."/>
            <person name="Coulson A."/>
            <person name="Durbin R.M."/>
            <person name="Hubbard T."/>
            <person name="Sulston J.E."/>
            <person name="Dunham I."/>
            <person name="Rogers J."/>
            <person name="Beck S."/>
        </authorList>
    </citation>
    <scope>NUCLEOTIDE SEQUENCE [LARGE SCALE GENOMIC DNA]</scope>
</reference>
<reference key="3">
    <citation type="submission" date="2005-09" db="EMBL/GenBank/DDBJ databases">
        <authorList>
            <person name="Mural R.J."/>
            <person name="Istrail S."/>
            <person name="Sutton G.G."/>
            <person name="Florea L."/>
            <person name="Halpern A.L."/>
            <person name="Mobarry C.M."/>
            <person name="Lippert R."/>
            <person name="Walenz B."/>
            <person name="Shatkay H."/>
            <person name="Dew I."/>
            <person name="Miller J.R."/>
            <person name="Flanigan M.J."/>
            <person name="Edwards N.J."/>
            <person name="Bolanos R."/>
            <person name="Fasulo D."/>
            <person name="Halldorsson B.V."/>
            <person name="Hannenhalli S."/>
            <person name="Turner R."/>
            <person name="Yooseph S."/>
            <person name="Lu F."/>
            <person name="Nusskern D.R."/>
            <person name="Shue B.C."/>
            <person name="Zheng X.H."/>
            <person name="Zhong F."/>
            <person name="Delcher A.L."/>
            <person name="Huson D.H."/>
            <person name="Kravitz S.A."/>
            <person name="Mouchard L."/>
            <person name="Reinert K."/>
            <person name="Remington K.A."/>
            <person name="Clark A.G."/>
            <person name="Waterman M.S."/>
            <person name="Eichler E.E."/>
            <person name="Adams M.D."/>
            <person name="Hunkapiller M.W."/>
            <person name="Myers E.W."/>
            <person name="Venter J.C."/>
        </authorList>
    </citation>
    <scope>NUCLEOTIDE SEQUENCE [LARGE SCALE GENOMIC DNA]</scope>
</reference>
<reference key="4">
    <citation type="journal article" date="2004" name="Genome Res.">
        <title>The status, quality, and expansion of the NIH full-length cDNA project: the Mammalian Gene Collection (MGC).</title>
        <authorList>
            <consortium name="The MGC Project Team"/>
        </authorList>
    </citation>
    <scope>NUCLEOTIDE SEQUENCE [LARGE SCALE MRNA] (ISOFORM 1)</scope>
    <scope>VARIANT ASP-433</scope>
    <source>
        <tissue>Testis</tissue>
    </source>
</reference>
<reference key="5">
    <citation type="journal article" date="2001" name="Genome Res.">
        <title>Towards a catalog of human genes and proteins: sequencing and analysis of 500 novel complete protein coding human cDNAs.</title>
        <authorList>
            <person name="Wiemann S."/>
            <person name="Weil B."/>
            <person name="Wellenreuther R."/>
            <person name="Gassenhuber J."/>
            <person name="Glassl S."/>
            <person name="Ansorge W."/>
            <person name="Boecher M."/>
            <person name="Bloecker H."/>
            <person name="Bauersachs S."/>
            <person name="Blum H."/>
            <person name="Lauber J."/>
            <person name="Duesterhoeft A."/>
            <person name="Beyer A."/>
            <person name="Koehrer K."/>
            <person name="Strack N."/>
            <person name="Mewes H.-W."/>
            <person name="Ottenwaelder B."/>
            <person name="Obermaier B."/>
            <person name="Tampe J."/>
            <person name="Heubner D."/>
            <person name="Wambutt R."/>
            <person name="Korn B."/>
            <person name="Klein M."/>
            <person name="Poustka A."/>
        </authorList>
    </citation>
    <scope>NUCLEOTIDE SEQUENCE [LARGE SCALE MRNA] OF 160-867</scope>
    <source>
        <tissue>Testis</tissue>
    </source>
</reference>
<reference key="6">
    <citation type="journal article" date="2019" name="Am. J. Hum. Genet.">
        <title>Bi-allelic Mutations in ARMC2 lead to severe astheno-teratozoospermia due to sperm flagellum malformations in humans and mice.</title>
        <authorList>
            <person name="Coutton C."/>
            <person name="Martinez G."/>
            <person name="Kherraf Z.E."/>
            <person name="Amiri-Yekta A."/>
            <person name="Boguenet M."/>
            <person name="Saut A."/>
            <person name="He X."/>
            <person name="Zhang F."/>
            <person name="Cristou-Kent M."/>
            <person name="Escoffier J."/>
            <person name="Bidart M."/>
            <person name="Satre V."/>
            <person name="Conne B."/>
            <person name="Fourati Ben Mustapha S."/>
            <person name="Halouani L."/>
            <person name="Marrakchi O."/>
            <person name="Makni M."/>
            <person name="Latrous H."/>
            <person name="Kharouf M."/>
            <person name="Pernet-Gallay K."/>
            <person name="Bonhivers M."/>
            <person name="Hennebicq S."/>
            <person name="Rives N."/>
            <person name="Dulioust E."/>
            <person name="Toure A."/>
            <person name="Gourabi H."/>
            <person name="Cao Y."/>
            <person name="Zouari R."/>
            <person name="Hosseini S.H."/>
            <person name="Nef S."/>
            <person name="Thierry-Mieg N."/>
            <person name="Arnoult C."/>
            <person name="Ray P.F."/>
        </authorList>
    </citation>
    <scope>INVOLVEMENT IN SPGF38</scope>
    <scope>VARIANTS SPGF38 141-GLN--PHE-867 DEL AND ASN-760</scope>
    <scope>TISSUE SPECIFICITY</scope>
</reference>
<sequence length="867" mass="96867">MLSPNDKMLGKLDPFYQPSVSKQKTSAEIISEARNALRTVRTQRPFTPQEAQRKLFGPASSRTSENRPPSSFSLHASSFESSDSRPISGTRLSPLELKPKVPASPTREEDSCFSFPKPPVDPAKIRRVSNARARLFRAASQRALLPDRSLPPSDSKKTVESKETVMMGDSMVKINGIYLTKSNAICHLKSHPLQLTDDGGFSEIKEQEMFKGTTSLPSHLKNGGDQGKRHARASSCPSSSDLSRLQTKAVPKADLQEEDAEIEVDEVFWNTRIVPILRELEKEENIETVCAACTQLHHALEEGNMLGNKFKGRSILLKTLCKLVDVGSDSLSLKLAKIILALKVSRKNLLNVCKLIFKISRNEKNDSLIQNDSILESLLEVLRSEDLQTNMEAFLYCMGSIKFISGNLGFLNEMISKGAVEILINLIKQINENIKKCGTFLPNSGHLLVQVTATLRNLVDSSLVRSKFLNISALPQLCTAMEQYKGDKDVCTNIARIFSKLTSYRDCCTALASYSRCYALFLNLINKYQKKQDLVVRVVFILGNLTAKNNQAREQFSKEKGSIQTLLSLFQTFHQLDLHSQKPVGQRGEQHRAQRPPSEAEDVLIKLTRVLANIAIHPGVGPVLAANPGIVGLLLTTLEYKSLDDCEELVINATATINNLSYYQVKNSIIQDKKLYIAELLLKLLVSNNMDGILEAVRVFGNLSQDHDVCDFIVQNNVHRFMMALLDAQHQDICFSACGVLLNLTVDKDKRVILKEGGGIKKLVDCLRDLGPTDWQLACLVCKTLWNFSENITNASSCFGNEDTNTLLLLLSSFLDEELALDGSFDPDLKNYHKLHWETEFKPVAQQLLNRIQRHHTFLEPLPIPSF</sequence>
<evidence type="ECO:0000250" key="1">
    <source>
        <dbReference type="UniProtKB" id="Q3URY6"/>
    </source>
</evidence>
<evidence type="ECO:0000256" key="2">
    <source>
        <dbReference type="SAM" id="MobiDB-lite"/>
    </source>
</evidence>
<evidence type="ECO:0000269" key="3">
    <source>
    </source>
</evidence>
<evidence type="ECO:0000269" key="4">
    <source>
    </source>
</evidence>
<evidence type="ECO:0000303" key="5">
    <source>
    </source>
</evidence>
<evidence type="ECO:0000303" key="6">
    <source>
    </source>
</evidence>
<evidence type="ECO:0000305" key="7"/>
<evidence type="ECO:0000312" key="8">
    <source>
        <dbReference type="HGNC" id="HGNC:23045"/>
    </source>
</evidence>
<feature type="chain" id="PRO_0000284401" description="Armadillo repeat-containing protein 2">
    <location>
        <begin position="1"/>
        <end position="867"/>
    </location>
</feature>
<feature type="repeat" description="ARM 1">
    <location>
        <begin position="262"/>
        <end position="301"/>
    </location>
</feature>
<feature type="repeat" description="ARM 2">
    <location>
        <begin position="304"/>
        <end position="344"/>
    </location>
</feature>
<feature type="repeat" description="ARM 3">
    <location>
        <begin position="363"/>
        <end position="403"/>
    </location>
</feature>
<feature type="repeat" description="ARM 4">
    <location>
        <begin position="408"/>
        <end position="449"/>
    </location>
</feature>
<feature type="repeat" description="ARM 5">
    <location>
        <begin position="462"/>
        <end position="503"/>
    </location>
</feature>
<feature type="repeat" description="ARM 6">
    <location>
        <begin position="506"/>
        <end position="547"/>
    </location>
</feature>
<feature type="repeat" description="ARM 7">
    <location>
        <begin position="551"/>
        <end position="589"/>
    </location>
</feature>
<feature type="repeat" description="ARM 8">
    <location>
        <begin position="591"/>
        <end position="616"/>
    </location>
</feature>
<feature type="repeat" description="ARM 9">
    <location>
        <begin position="619"/>
        <end position="662"/>
    </location>
</feature>
<feature type="repeat" description="ARM 10">
    <location>
        <begin position="664"/>
        <end position="705"/>
    </location>
</feature>
<feature type="repeat" description="ARM 11">
    <location>
        <begin position="707"/>
        <end position="746"/>
    </location>
</feature>
<feature type="repeat" description="ARM 12">
    <location>
        <begin position="748"/>
        <end position="790"/>
    </location>
</feature>
<feature type="region of interest" description="Disordered" evidence="2">
    <location>
        <begin position="1"/>
        <end position="115"/>
    </location>
</feature>
<feature type="region of interest" description="Disordered" evidence="2">
    <location>
        <begin position="214"/>
        <end position="252"/>
    </location>
</feature>
<feature type="compositionally biased region" description="Polar residues" evidence="2">
    <location>
        <begin position="18"/>
        <end position="28"/>
    </location>
</feature>
<feature type="compositionally biased region" description="Polar residues" evidence="2">
    <location>
        <begin position="40"/>
        <end position="50"/>
    </location>
</feature>
<feature type="compositionally biased region" description="Polar residues" evidence="2">
    <location>
        <begin position="60"/>
        <end position="69"/>
    </location>
</feature>
<feature type="compositionally biased region" description="Low complexity" evidence="2">
    <location>
        <begin position="70"/>
        <end position="81"/>
    </location>
</feature>
<feature type="compositionally biased region" description="Low complexity" evidence="2">
    <location>
        <begin position="234"/>
        <end position="243"/>
    </location>
</feature>
<feature type="splice variant" id="VSP_055622" description="In isoform 2." evidence="5">
    <location>
        <begin position="1"/>
        <end position="165"/>
    </location>
</feature>
<feature type="sequence variant" id="VAR_082205" description="In SPGF38; uncertain significance." evidence="4">
    <location>
        <begin position="141"/>
        <end position="867"/>
    </location>
</feature>
<feature type="sequence variant" id="VAR_031948" description="In dbSNP:rs9386758.">
    <original>M</original>
    <variation>T</variation>
    <location>
        <position position="166"/>
    </location>
</feature>
<feature type="sequence variant" id="VAR_031949" description="In dbSNP:rs17852775." evidence="3">
    <original>N</original>
    <variation>D</variation>
    <location>
        <position position="433"/>
    </location>
</feature>
<feature type="sequence variant" id="VAR_082206" description="In SPGF38; uncertain significance; dbSNP:rs1562435988." evidence="4">
    <original>I</original>
    <variation>N</variation>
    <location>
        <position position="760"/>
    </location>
</feature>
<feature type="sequence conflict" description="In Ref. 1; BAG57766." evidence="7" ref="1">
    <original>E</original>
    <variation>G</variation>
    <location>
        <position position="392"/>
    </location>
</feature>
<keyword id="KW-0025">Alternative splicing</keyword>
<keyword id="KW-0221">Differentiation</keyword>
<keyword id="KW-0225">Disease variant</keyword>
<keyword id="KW-1267">Proteomics identification</keyword>
<keyword id="KW-1185">Reference proteome</keyword>
<keyword id="KW-0677">Repeat</keyword>
<keyword id="KW-0744">Spermatogenesis</keyword>
<proteinExistence type="evidence at protein level"/>
<organism>
    <name type="scientific">Homo sapiens</name>
    <name type="common">Human</name>
    <dbReference type="NCBI Taxonomy" id="9606"/>
    <lineage>
        <taxon>Eukaryota</taxon>
        <taxon>Metazoa</taxon>
        <taxon>Chordata</taxon>
        <taxon>Craniata</taxon>
        <taxon>Vertebrata</taxon>
        <taxon>Euteleostomi</taxon>
        <taxon>Mammalia</taxon>
        <taxon>Eutheria</taxon>
        <taxon>Euarchontoglires</taxon>
        <taxon>Primates</taxon>
        <taxon>Haplorrhini</taxon>
        <taxon>Catarrhini</taxon>
        <taxon>Hominidae</taxon>
        <taxon>Homo</taxon>
    </lineage>
</organism>
<dbReference type="EMBL" id="AK292499">
    <property type="protein sequence ID" value="BAF85188.1"/>
    <property type="status" value="ALT_INIT"/>
    <property type="molecule type" value="mRNA"/>
</dbReference>
<dbReference type="EMBL" id="AK294574">
    <property type="protein sequence ID" value="BAG57766.1"/>
    <property type="molecule type" value="mRNA"/>
</dbReference>
<dbReference type="EMBL" id="AL390208">
    <property type="status" value="NOT_ANNOTATED_CDS"/>
    <property type="molecule type" value="Genomic_DNA"/>
</dbReference>
<dbReference type="EMBL" id="AL445189">
    <property type="status" value="NOT_ANNOTATED_CDS"/>
    <property type="molecule type" value="Genomic_DNA"/>
</dbReference>
<dbReference type="EMBL" id="CH471051">
    <property type="protein sequence ID" value="EAW48369.1"/>
    <property type="molecule type" value="Genomic_DNA"/>
</dbReference>
<dbReference type="EMBL" id="BC030603">
    <property type="protein sequence ID" value="AAH30603.2"/>
    <property type="status" value="ALT_INIT"/>
    <property type="molecule type" value="mRNA"/>
</dbReference>
<dbReference type="EMBL" id="AL136754">
    <property type="protein sequence ID" value="CAB66688.2"/>
    <property type="molecule type" value="mRNA"/>
</dbReference>
<dbReference type="CCDS" id="CCDS5069.2">
    <molecule id="Q8NEN0-1"/>
</dbReference>
<dbReference type="CCDS" id="CCDS69168.1">
    <molecule id="Q8NEN0-2"/>
</dbReference>
<dbReference type="RefSeq" id="NP_001273538.1">
    <molecule id="Q8NEN0-2"/>
    <property type="nucleotide sequence ID" value="NM_001286609.2"/>
</dbReference>
<dbReference type="RefSeq" id="NP_115507.4">
    <molecule id="Q8NEN0-1"/>
    <property type="nucleotide sequence ID" value="NM_032131.5"/>
</dbReference>
<dbReference type="RefSeq" id="XP_005267211.1">
    <molecule id="Q8NEN0-1"/>
    <property type="nucleotide sequence ID" value="XM_005267154.5"/>
</dbReference>
<dbReference type="RefSeq" id="XP_005267212.1">
    <molecule id="Q8NEN0-1"/>
    <property type="nucleotide sequence ID" value="XM_005267155.3"/>
</dbReference>
<dbReference type="RefSeq" id="XP_005267214.1">
    <property type="nucleotide sequence ID" value="XM_005267157.3"/>
</dbReference>
<dbReference type="RefSeq" id="XP_006715636.1">
    <molecule id="Q8NEN0-1"/>
    <property type="nucleotide sequence ID" value="XM_006715573.3"/>
</dbReference>
<dbReference type="RefSeq" id="XP_006715637.1">
    <molecule id="Q8NEN0-2"/>
    <property type="nucleotide sequence ID" value="XM_006715574.3"/>
</dbReference>
<dbReference type="RefSeq" id="XP_011534468.1">
    <molecule id="Q8NEN0-1"/>
    <property type="nucleotide sequence ID" value="XM_011536166.2"/>
</dbReference>
<dbReference type="RefSeq" id="XP_011534474.1">
    <molecule id="Q8NEN0-2"/>
    <property type="nucleotide sequence ID" value="XM_011536172.3"/>
</dbReference>
<dbReference type="RefSeq" id="XP_054212492.1">
    <molecule id="Q8NEN0-1"/>
    <property type="nucleotide sequence ID" value="XM_054356517.1"/>
</dbReference>
<dbReference type="RefSeq" id="XP_054212493.1">
    <molecule id="Q8NEN0-1"/>
    <property type="nucleotide sequence ID" value="XM_054356518.1"/>
</dbReference>
<dbReference type="RefSeq" id="XP_054212494.1">
    <molecule id="Q8NEN0-1"/>
    <property type="nucleotide sequence ID" value="XM_054356519.1"/>
</dbReference>
<dbReference type="RefSeq" id="XP_054212495.1">
    <molecule id="Q8NEN0-1"/>
    <property type="nucleotide sequence ID" value="XM_054356520.1"/>
</dbReference>
<dbReference type="RefSeq" id="XP_054212500.1">
    <molecule id="Q8NEN0-2"/>
    <property type="nucleotide sequence ID" value="XM_054356525.1"/>
</dbReference>
<dbReference type="RefSeq" id="XP_054212501.1">
    <molecule id="Q8NEN0-2"/>
    <property type="nucleotide sequence ID" value="XM_054356526.1"/>
</dbReference>
<dbReference type="SMR" id="Q8NEN0"/>
<dbReference type="BioGRID" id="123866">
    <property type="interactions" value="5"/>
</dbReference>
<dbReference type="FunCoup" id="Q8NEN0">
    <property type="interactions" value="171"/>
</dbReference>
<dbReference type="IntAct" id="Q8NEN0">
    <property type="interactions" value="3"/>
</dbReference>
<dbReference type="STRING" id="9606.ENSP00000376417"/>
<dbReference type="GlyGen" id="Q8NEN0">
    <property type="glycosylation" value="1 site, 1 O-linked glycan (1 site)"/>
</dbReference>
<dbReference type="iPTMnet" id="Q8NEN0"/>
<dbReference type="PhosphoSitePlus" id="Q8NEN0"/>
<dbReference type="BioMuta" id="ARMC2"/>
<dbReference type="DMDM" id="172045816"/>
<dbReference type="jPOST" id="Q8NEN0"/>
<dbReference type="MassIVE" id="Q8NEN0"/>
<dbReference type="PaxDb" id="9606-ENSP00000376417"/>
<dbReference type="PeptideAtlas" id="Q8NEN0"/>
<dbReference type="ProteomicsDB" id="33870"/>
<dbReference type="ProteomicsDB" id="73188">
    <molecule id="Q8NEN0-1"/>
</dbReference>
<dbReference type="Antibodypedia" id="19140">
    <property type="antibodies" value="17 antibodies from 7 providers"/>
</dbReference>
<dbReference type="DNASU" id="84071"/>
<dbReference type="Ensembl" id="ENST00000368972.7">
    <molecule id="Q8NEN0-2"/>
    <property type="protein sequence ID" value="ENSP00000357968.3"/>
    <property type="gene ID" value="ENSG00000118690.13"/>
</dbReference>
<dbReference type="Ensembl" id="ENST00000392644.9">
    <molecule id="Q8NEN0-1"/>
    <property type="protein sequence ID" value="ENSP00000376417.4"/>
    <property type="gene ID" value="ENSG00000118690.13"/>
</dbReference>
<dbReference type="GeneID" id="84071"/>
<dbReference type="KEGG" id="hsa:84071"/>
<dbReference type="MANE-Select" id="ENST00000392644.9">
    <property type="protein sequence ID" value="ENSP00000376417.4"/>
    <property type="RefSeq nucleotide sequence ID" value="NM_032131.6"/>
    <property type="RefSeq protein sequence ID" value="NP_115507.4"/>
</dbReference>
<dbReference type="UCSC" id="uc003pss.6">
    <molecule id="Q8NEN0-1"/>
    <property type="organism name" value="human"/>
</dbReference>
<dbReference type="AGR" id="HGNC:23045"/>
<dbReference type="CTD" id="84071"/>
<dbReference type="DisGeNET" id="84071"/>
<dbReference type="GeneCards" id="ARMC2"/>
<dbReference type="HGNC" id="HGNC:23045">
    <property type="gene designation" value="ARMC2"/>
</dbReference>
<dbReference type="HPA" id="ENSG00000118690">
    <property type="expression patterns" value="Tissue enhanced (testis)"/>
</dbReference>
<dbReference type="MalaCards" id="ARMC2"/>
<dbReference type="MIM" id="618424">
    <property type="type" value="gene"/>
</dbReference>
<dbReference type="MIM" id="618433">
    <property type="type" value="phenotype"/>
</dbReference>
<dbReference type="neXtProt" id="NX_Q8NEN0"/>
<dbReference type="OpenTargets" id="ENSG00000118690"/>
<dbReference type="Orphanet" id="276234">
    <property type="disease" value="Non-syndromic male infertility due to sperm motility disorder"/>
</dbReference>
<dbReference type="PharmGKB" id="PA134943829"/>
<dbReference type="VEuPathDB" id="HostDB:ENSG00000118690"/>
<dbReference type="eggNOG" id="KOG1048">
    <property type="taxonomic scope" value="Eukaryota"/>
</dbReference>
<dbReference type="GeneTree" id="ENSGT00390000000663"/>
<dbReference type="HOGENOM" id="CLU_007173_0_0_1"/>
<dbReference type="InParanoid" id="Q8NEN0"/>
<dbReference type="OMA" id="EACIYAY"/>
<dbReference type="OrthoDB" id="247006at2759"/>
<dbReference type="PAN-GO" id="Q8NEN0">
    <property type="GO annotations" value="2 GO annotations based on evolutionary models"/>
</dbReference>
<dbReference type="PhylomeDB" id="Q8NEN0"/>
<dbReference type="TreeFam" id="TF329012"/>
<dbReference type="PathwayCommons" id="Q8NEN0"/>
<dbReference type="SignaLink" id="Q8NEN0"/>
<dbReference type="BioGRID-ORCS" id="84071">
    <property type="hits" value="13 hits in 1146 CRISPR screens"/>
</dbReference>
<dbReference type="ChiTaRS" id="ARMC2">
    <property type="organism name" value="human"/>
</dbReference>
<dbReference type="GenomeRNAi" id="84071"/>
<dbReference type="Pharos" id="Q8NEN0">
    <property type="development level" value="Tdark"/>
</dbReference>
<dbReference type="PRO" id="PR:Q8NEN0"/>
<dbReference type="Proteomes" id="UP000005640">
    <property type="component" value="Chromosome 6"/>
</dbReference>
<dbReference type="RNAct" id="Q8NEN0">
    <property type="molecule type" value="protein"/>
</dbReference>
<dbReference type="Bgee" id="ENSG00000118690">
    <property type="expression patterns" value="Expressed in oocyte and 107 other cell types or tissues"/>
</dbReference>
<dbReference type="ExpressionAtlas" id="Q8NEN0">
    <property type="expression patterns" value="baseline and differential"/>
</dbReference>
<dbReference type="GO" id="GO:0000902">
    <property type="term" value="P:cell morphogenesis"/>
    <property type="evidence" value="ECO:0007669"/>
    <property type="project" value="Ensembl"/>
</dbReference>
<dbReference type="GO" id="GO:0044782">
    <property type="term" value="P:cilium organization"/>
    <property type="evidence" value="ECO:0000318"/>
    <property type="project" value="GO_Central"/>
</dbReference>
<dbReference type="GO" id="GO:0006997">
    <property type="term" value="P:nucleus organization"/>
    <property type="evidence" value="ECO:0007669"/>
    <property type="project" value="Ensembl"/>
</dbReference>
<dbReference type="GO" id="GO:0007288">
    <property type="term" value="P:sperm axoneme assembly"/>
    <property type="evidence" value="ECO:0000315"/>
    <property type="project" value="UniProtKB"/>
</dbReference>
<dbReference type="Gene3D" id="1.25.10.10">
    <property type="entry name" value="Leucine-rich Repeat Variant"/>
    <property type="match status" value="2"/>
</dbReference>
<dbReference type="InterPro" id="IPR011989">
    <property type="entry name" value="ARM-like"/>
</dbReference>
<dbReference type="InterPro" id="IPR016024">
    <property type="entry name" value="ARM-type_fold"/>
</dbReference>
<dbReference type="InterPro" id="IPR000225">
    <property type="entry name" value="Armadillo"/>
</dbReference>
<dbReference type="InterPro" id="IPR038905">
    <property type="entry name" value="ARMC2"/>
</dbReference>
<dbReference type="PANTHER" id="PTHR21356">
    <property type="entry name" value="ARMADILLO REPEAT CONTAINING 2"/>
    <property type="match status" value="1"/>
</dbReference>
<dbReference type="PANTHER" id="PTHR21356:SF1">
    <property type="entry name" value="ARMADILLO REPEAT-CONTAINING PROTEIN 2"/>
    <property type="match status" value="1"/>
</dbReference>
<dbReference type="SMART" id="SM00185">
    <property type="entry name" value="ARM"/>
    <property type="match status" value="5"/>
</dbReference>
<dbReference type="SUPFAM" id="SSF48371">
    <property type="entry name" value="ARM repeat"/>
    <property type="match status" value="1"/>
</dbReference>